<proteinExistence type="inferred from homology"/>
<name>P69_OYMV</name>
<comment type="similarity">
    <text evidence="2">Belongs to the tymoviridae protein p69 family.</text>
</comment>
<reference key="1">
    <citation type="journal article" date="1989" name="Virology">
        <title>Nucleotide sequence of the ononis yellow mosaic tymovirus genome.</title>
        <authorList>
            <person name="Ding S.W."/>
            <person name="Keese P."/>
            <person name="Gibbs A."/>
        </authorList>
    </citation>
    <scope>NUCLEOTIDE SEQUENCE [GENOMIC RNA]</scope>
</reference>
<organismHost>
    <name type="scientific">Ononis</name>
    <dbReference type="NCBI Taxonomy" id="58889"/>
</organismHost>
<feature type="chain" id="PRO_0000222942" description="66 kDa protein">
    <location>
        <begin position="1"/>
        <end position="597"/>
    </location>
</feature>
<feature type="region of interest" description="Disordered" evidence="1">
    <location>
        <begin position="62"/>
        <end position="82"/>
    </location>
</feature>
<feature type="region of interest" description="Disordered" evidence="1">
    <location>
        <begin position="160"/>
        <end position="198"/>
    </location>
</feature>
<feature type="region of interest" description="Disordered" evidence="1">
    <location>
        <begin position="218"/>
        <end position="315"/>
    </location>
</feature>
<feature type="region of interest" description="Disordered" evidence="1">
    <location>
        <begin position="329"/>
        <end position="411"/>
    </location>
</feature>
<feature type="region of interest" description="Disordered" evidence="1">
    <location>
        <begin position="535"/>
        <end position="586"/>
    </location>
</feature>
<feature type="compositionally biased region" description="Polar residues" evidence="1">
    <location>
        <begin position="64"/>
        <end position="80"/>
    </location>
</feature>
<feature type="compositionally biased region" description="Polar residues" evidence="1">
    <location>
        <begin position="218"/>
        <end position="234"/>
    </location>
</feature>
<feature type="compositionally biased region" description="Low complexity" evidence="1">
    <location>
        <begin position="273"/>
        <end position="291"/>
    </location>
</feature>
<feature type="compositionally biased region" description="Polar residues" evidence="1">
    <location>
        <begin position="305"/>
        <end position="315"/>
    </location>
</feature>
<feature type="compositionally biased region" description="Basic residues" evidence="1">
    <location>
        <begin position="389"/>
        <end position="400"/>
    </location>
</feature>
<feature type="compositionally biased region" description="Low complexity" evidence="1">
    <location>
        <begin position="535"/>
        <end position="574"/>
    </location>
</feature>
<feature type="compositionally biased region" description="Polar residues" evidence="1">
    <location>
        <begin position="575"/>
        <end position="584"/>
    </location>
</feature>
<accession>P20130</accession>
<organism>
    <name type="scientific">Ononis yellow mosaic virus</name>
    <dbReference type="NCBI Taxonomy" id="12153"/>
    <lineage>
        <taxon>Viruses</taxon>
        <taxon>Riboviria</taxon>
        <taxon>Orthornavirae</taxon>
        <taxon>Kitrinoviricota</taxon>
        <taxon>Alsuviricetes</taxon>
        <taxon>Tymovirales</taxon>
        <taxon>Tymoviridae</taxon>
        <taxon>Tymovirus</taxon>
        <taxon>Tymovirus ononis</taxon>
    </lineage>
</organism>
<sequence>MSNGLRTSFERISLFHPQGFISESSAEFCCSAPSNLSPKFPMDHWERTSSFSPRCRHPDLRVRLQSSPPRGPQSDRNLPSLQPLELHGDRPGLCDVHETLQVQKIGLRQSKLLRTSKLPSHRGRFRSIPLHLHLSSEVRNRFHARCPDVLQPLSDTRPLHSVPLSSEAPLQSSCSPRKLLHRPLSPPKPLHLHNFRQHSSLCSRRSPCRKLRPTPRCNQLAQAQQHPLPSSKPLSLQAGILGPCPLPPHNKRSPSPAVIRKTAGILPHPKLPPSSRGHLPSSTSSSSPRSNRGVRCSVHLHKSRSNSQDLRSCRVRSNSLQQTPILMGHFKSLGQSPNLRSFERPRPTRRSLRLLPLSPQKVPTVHVPTHQQSGHKGPSLPRPHSPSRQTHHARLPHSKRVSLPNSVLHHDRPKRPIHFGSFPINVAPSHLLPRKLWSRASSPPTCSPTTSNHGHPEEALRFLPKNLPQHCQMALMENYCSHFSSPSSSVSFPEDHQSSLPPISTRWVQCSSPSFSLQSFLVIGDIPCPISFPLSSPQSHSSESLRGDSPPSSHLPSSPSSACSGDSFASCSSFGPSNPTSSASALGGNHFNFSFFS</sequence>
<evidence type="ECO:0000256" key="1">
    <source>
        <dbReference type="SAM" id="MobiDB-lite"/>
    </source>
</evidence>
<evidence type="ECO:0000305" key="2"/>
<protein>
    <recommendedName>
        <fullName>66 kDa protein</fullName>
    </recommendedName>
</protein>
<dbReference type="EMBL" id="J04375">
    <property type="protein sequence ID" value="AAA46795.1"/>
    <property type="molecule type" value="Genomic_RNA"/>
</dbReference>
<dbReference type="PIR" id="JQ0107">
    <property type="entry name" value="JQ0107"/>
</dbReference>
<dbReference type="RefSeq" id="NP_041256.1">
    <property type="nucleotide sequence ID" value="NC_001513.1"/>
</dbReference>
<dbReference type="GeneID" id="1493969"/>
<dbReference type="KEGG" id="vg:1493969"/>
<dbReference type="OrthoDB" id="19527at10239"/>
<dbReference type="Proteomes" id="UP000007789">
    <property type="component" value="Genome"/>
</dbReference>
<dbReference type="InterPro" id="IPR004935">
    <property type="entry name" value="45/70kDa_tymovirus"/>
</dbReference>
<dbReference type="Pfam" id="PF03251">
    <property type="entry name" value="Tymo_45kd_70kd"/>
    <property type="match status" value="1"/>
</dbReference>